<comment type="function">
    <text evidence="6 8">Plays a role in the regulation of food intake and energy metabolism (PubMed:29116147). May also be involved in suppressing the anxiety response by promoting the expression of serotonin-related genes such as fev, tph2 and slc6a4a (PubMed:31474838).</text>
</comment>
<comment type="function">
    <molecule>Spexin-1</molecule>
    <text evidence="5 6">Acts as a ligand for galanin receptors galr2a and galr2b (PubMed:24517231). Brain administration of the peptide inhibits food consumption and elevates levels of glucose, triacylglycerol and cholesterol in the serum (PubMed:29116147). Likely to control food intake by regulating appetite related genes which includes the negative regulation of the orexigenic factor agrp (PubMed:29116147). By controlling food intake it may act as a satiety factor in energy metabolism (PubMed:29116147).</text>
</comment>
<comment type="subcellular location">
    <molecule>Spexin-1</molecule>
    <subcellularLocation>
        <location evidence="2">Secreted</location>
    </subcellularLocation>
    <subcellularLocation>
        <location evidence="2">Secreted</location>
        <location evidence="2">Extracellular space</location>
    </subcellularLocation>
    <subcellularLocation>
        <location evidence="2">Cytoplasmic vesicle</location>
        <location evidence="2">Secretory vesicle</location>
    </subcellularLocation>
</comment>
<comment type="tissue specificity">
    <text evidence="4 5 7 8">Mainly expressed in the brain and ovary (PubMed:23623870, PubMed:24517231). Detected bilaterally in the adult brainstem (PubMed:30903017). Expressed in neurons in the dorsal habenula (dHb) (PubMed:30903017, PubMed:31474838). In the dHb some neurons project into the interpeduncular nucleus (IPN) where expression often overlaps with galr2a and galr2b (PubMed:30903017, PubMed:31474838). Weakly expressed in the liver, intestine, kidney, heart and gill (PubMed:23623870).</text>
</comment>
<comment type="developmental stage">
    <text evidence="7">In embryos, first detected at the 1 cell stage but disappears by the 2 cell stage (PubMed:30903017). Expressed again from 24 hours post fertilization (hpf) (PubMed:30903017). At 24 hours post fertilization (hpf), detected in a few cells in the embryo hindbrain (PubMed:30903017). In larvae, expressed in the neurons and nerve fibers of the midbrain tegmentum and hindbrain (PubMed:30903017). In the hindbrain, expressed in reticulospinal neurons with spinal projections (PubMed:30903017). Axons of hindbrain neurons project into the dorsal spinal cord where expression often overlaps with galr2b (PubMed:30903017). In larvae, not detected in the hypothalamus and not detected outside of the brain (PubMed:30903017).</text>
</comment>
<comment type="induction">
    <text evidence="4">Up-regulated during folliculogenesis.</text>
</comment>
<comment type="similarity">
    <text evidence="11">Belongs to the spexin family.</text>
</comment>
<sequence length="102" mass="11681">MKDLRTLAAYALALLLLATFVSHSWSAPKGSFQRRNWTPQAMLYLKGTQGRRFVSEDRNEGDLYDTIRLESRSQNTENLSISKAAAFLLNILQQARDEDEPY</sequence>
<reference key="1">
    <citation type="journal article" date="2013" name="Nature">
        <title>The zebrafish reference genome sequence and its relationship to the human genome.</title>
        <authorList>
            <person name="Howe K."/>
            <person name="Clark M.D."/>
            <person name="Torroja C.F."/>
            <person name="Torrance J."/>
            <person name="Berthelot C."/>
            <person name="Muffato M."/>
            <person name="Collins J.E."/>
            <person name="Humphray S."/>
            <person name="McLaren K."/>
            <person name="Matthews L."/>
            <person name="McLaren S."/>
            <person name="Sealy I."/>
            <person name="Caccamo M."/>
            <person name="Churcher C."/>
            <person name="Scott C."/>
            <person name="Barrett J.C."/>
            <person name="Koch R."/>
            <person name="Rauch G.J."/>
            <person name="White S."/>
            <person name="Chow W."/>
            <person name="Kilian B."/>
            <person name="Quintais L.T."/>
            <person name="Guerra-Assuncao J.A."/>
            <person name="Zhou Y."/>
            <person name="Gu Y."/>
            <person name="Yen J."/>
            <person name="Vogel J.H."/>
            <person name="Eyre T."/>
            <person name="Redmond S."/>
            <person name="Banerjee R."/>
            <person name="Chi J."/>
            <person name="Fu B."/>
            <person name="Langley E."/>
            <person name="Maguire S.F."/>
            <person name="Laird G.K."/>
            <person name="Lloyd D."/>
            <person name="Kenyon E."/>
            <person name="Donaldson S."/>
            <person name="Sehra H."/>
            <person name="Almeida-King J."/>
            <person name="Loveland J."/>
            <person name="Trevanion S."/>
            <person name="Jones M."/>
            <person name="Quail M."/>
            <person name="Willey D."/>
            <person name="Hunt A."/>
            <person name="Burton J."/>
            <person name="Sims S."/>
            <person name="McLay K."/>
            <person name="Plumb B."/>
            <person name="Davis J."/>
            <person name="Clee C."/>
            <person name="Oliver K."/>
            <person name="Clark R."/>
            <person name="Riddle C."/>
            <person name="Elliot D."/>
            <person name="Threadgold G."/>
            <person name="Harden G."/>
            <person name="Ware D."/>
            <person name="Begum S."/>
            <person name="Mortimore B."/>
            <person name="Kerry G."/>
            <person name="Heath P."/>
            <person name="Phillimore B."/>
            <person name="Tracey A."/>
            <person name="Corby N."/>
            <person name="Dunn M."/>
            <person name="Johnson C."/>
            <person name="Wood J."/>
            <person name="Clark S."/>
            <person name="Pelan S."/>
            <person name="Griffiths G."/>
            <person name="Smith M."/>
            <person name="Glithero R."/>
            <person name="Howden P."/>
            <person name="Barker N."/>
            <person name="Lloyd C."/>
            <person name="Stevens C."/>
            <person name="Harley J."/>
            <person name="Holt K."/>
            <person name="Panagiotidis G."/>
            <person name="Lovell J."/>
            <person name="Beasley H."/>
            <person name="Henderson C."/>
            <person name="Gordon D."/>
            <person name="Auger K."/>
            <person name="Wright D."/>
            <person name="Collins J."/>
            <person name="Raisen C."/>
            <person name="Dyer L."/>
            <person name="Leung K."/>
            <person name="Robertson L."/>
            <person name="Ambridge K."/>
            <person name="Leongamornlert D."/>
            <person name="McGuire S."/>
            <person name="Gilderthorp R."/>
            <person name="Griffiths C."/>
            <person name="Manthravadi D."/>
            <person name="Nichol S."/>
            <person name="Barker G."/>
            <person name="Whitehead S."/>
            <person name="Kay M."/>
            <person name="Brown J."/>
            <person name="Murnane C."/>
            <person name="Gray E."/>
            <person name="Humphries M."/>
            <person name="Sycamore N."/>
            <person name="Barker D."/>
            <person name="Saunders D."/>
            <person name="Wallis J."/>
            <person name="Babbage A."/>
            <person name="Hammond S."/>
            <person name="Mashreghi-Mohammadi M."/>
            <person name="Barr L."/>
            <person name="Martin S."/>
            <person name="Wray P."/>
            <person name="Ellington A."/>
            <person name="Matthews N."/>
            <person name="Ellwood M."/>
            <person name="Woodmansey R."/>
            <person name="Clark G."/>
            <person name="Cooper J."/>
            <person name="Tromans A."/>
            <person name="Grafham D."/>
            <person name="Skuce C."/>
            <person name="Pandian R."/>
            <person name="Andrews R."/>
            <person name="Harrison E."/>
            <person name="Kimberley A."/>
            <person name="Garnett J."/>
            <person name="Fosker N."/>
            <person name="Hall R."/>
            <person name="Garner P."/>
            <person name="Kelly D."/>
            <person name="Bird C."/>
            <person name="Palmer S."/>
            <person name="Gehring I."/>
            <person name="Berger A."/>
            <person name="Dooley C.M."/>
            <person name="Ersan-Urun Z."/>
            <person name="Eser C."/>
            <person name="Geiger H."/>
            <person name="Geisler M."/>
            <person name="Karotki L."/>
            <person name="Kirn A."/>
            <person name="Konantz J."/>
            <person name="Konantz M."/>
            <person name="Oberlander M."/>
            <person name="Rudolph-Geiger S."/>
            <person name="Teucke M."/>
            <person name="Lanz C."/>
            <person name="Raddatz G."/>
            <person name="Osoegawa K."/>
            <person name="Zhu B."/>
            <person name="Rapp A."/>
            <person name="Widaa S."/>
            <person name="Langford C."/>
            <person name="Yang F."/>
            <person name="Schuster S.C."/>
            <person name="Carter N.P."/>
            <person name="Harrow J."/>
            <person name="Ning Z."/>
            <person name="Herrero J."/>
            <person name="Searle S.M."/>
            <person name="Enright A."/>
            <person name="Geisler R."/>
            <person name="Plasterk R.H."/>
            <person name="Lee C."/>
            <person name="Westerfield M."/>
            <person name="de Jong P.J."/>
            <person name="Zon L.I."/>
            <person name="Postlethwait J.H."/>
            <person name="Nusslein-Volhard C."/>
            <person name="Hubbard T.J."/>
            <person name="Roest Crollius H."/>
            <person name="Rogers J."/>
            <person name="Stemple D.L."/>
        </authorList>
    </citation>
    <scope>NUCLEOTIDE SEQUENCE [LARGE SCALE GENOMIC DNA]</scope>
    <source>
        <strain>Tuebingen</strain>
    </source>
</reference>
<reference key="2">
    <citation type="journal article" date="2013" name="Mol. Cell. Endocrinol.">
        <title>A novel neuropeptide in suppressing luteinizing hormone release in goldfish, Carassius auratus.</title>
        <authorList>
            <person name="Liu Y."/>
            <person name="Li S."/>
            <person name="Qi X."/>
            <person name="Zhou W."/>
            <person name="Liu X."/>
            <person name="Lin H."/>
            <person name="Zhang Y."/>
            <person name="Cheng C.H."/>
        </authorList>
    </citation>
    <scope>INDUCTION</scope>
    <scope>TISSUE SPECIFICITY</scope>
</reference>
<reference key="3">
    <citation type="journal article" date="2014" name="Endocrinology">
        <title>Coevolution of the spexin/galanin/kisspeptin family: Spexin activates galanin receptor type II and III.</title>
        <authorList>
            <person name="Kim D.K."/>
            <person name="Yun S."/>
            <person name="Son G.H."/>
            <person name="Hwang J.I."/>
            <person name="Park C.R."/>
            <person name="Kim J.I."/>
            <person name="Kim K."/>
            <person name="Vaudry H."/>
            <person name="Seong J.Y."/>
        </authorList>
    </citation>
    <scope>FUNCTION (SPEXIN-1)</scope>
    <scope>TISSUE SPECIFICITY</scope>
</reference>
<reference key="4">
    <citation type="journal article" date="2017" name="Sci. Rep.">
        <title>Spexin Suppress Food Intake in Zebrafish: Evidence from Gene Knockout Study.</title>
        <authorList>
            <person name="Zheng B."/>
            <person name="Li S."/>
            <person name="Liu Y."/>
            <person name="Li Y."/>
            <person name="Chen H."/>
            <person name="Tang H."/>
            <person name="Liu X."/>
            <person name="Lin H."/>
            <person name="Zhang Y."/>
            <person name="Cheng C.H.K."/>
        </authorList>
    </citation>
    <scope>FUNCTION</scope>
    <scope>MUTAGENESIS OF 27-ALA--TYR-102</scope>
</reference>
<reference key="5">
    <citation type="journal article" date="2019" name="Front. Neural Circuits">
        <title>Overexpression of Spexin 1 in the Dorsal Habenula Reduces Anxiety in Zebrafish.</title>
        <authorList>
            <person name="Jeong I."/>
            <person name="Kim E."/>
            <person name="Seong J.Y."/>
            <person name="Park H.C."/>
        </authorList>
    </citation>
    <scope>FUNCTION</scope>
    <scope>SUBCELLULAR LOCATION</scope>
    <scope>TISSUE SPECIFICITY</scope>
    <scope>DEVELOPMENTAL STAGE</scope>
</reference>
<reference key="6">
    <citation type="journal article" date="2019" name="Sci. Rep.">
        <title>Distribution and neuronal circuit of spexin 1/2 neurons in the zebrafish CNS.</title>
        <authorList>
            <person name="Kim E."/>
            <person name="Jeong I."/>
            <person name="Chung A.Y."/>
            <person name="Kim S."/>
            <person name="Kwon S.H."/>
            <person name="Seong J.Y."/>
            <person name="Park H.C."/>
        </authorList>
    </citation>
    <scope>DEVELOPMENTAL STAGE</scope>
</reference>
<feature type="signal peptide" evidence="3">
    <location>
        <begin position="1"/>
        <end position="26"/>
    </location>
</feature>
<feature type="chain" id="PRO_0000430232" description="Spexin prohormone 1">
    <location>
        <begin position="27"/>
        <end position="102"/>
    </location>
</feature>
<feature type="propeptide" id="PRO_0000430233" evidence="1">
    <location>
        <begin position="27"/>
        <end position="35"/>
    </location>
</feature>
<feature type="peptide" id="PRO_0000430234" description="Spexin-1">
    <location>
        <begin position="36"/>
        <end position="49"/>
    </location>
</feature>
<feature type="propeptide" id="PRO_0000430235" evidence="1">
    <location>
        <begin position="50"/>
        <end position="102"/>
    </location>
</feature>
<feature type="site" description="Cleavage; by prohormone convertase 2" evidence="1">
    <location>
        <begin position="35"/>
        <end position="36"/>
    </location>
</feature>
<feature type="modified residue" description="Glutamine amide" evidence="1">
    <location>
        <position position="49"/>
    </location>
</feature>
<feature type="mutagenesis site" description="Increased food intake and elevated levels of glucose, triacylglycerol and cholesterol in serum. Expression levels of agrp in the hypothalamus, are significantly up-regulated in fed and unfed mutants. However at 3 hours post feeding, agrp levels continue to increase in fed mutants but decrease in unfed mutants. No effect on puberty onset, gamete maturation, body weight, body fat percentage and standard length." evidence="6">
    <original>APKGSFQRRNWTPQAMLYLKGTQGRRFVSEDRNEGDLYDTIRLESRSQNTENLSISKAAAFLLNILQQARDEDEPY</original>
    <variation>IPRAVFSVGIGHPKLCYI</variation>
    <location>
        <begin position="27"/>
        <end position="102"/>
    </location>
</feature>
<proteinExistence type="evidence at protein level"/>
<keyword id="KW-0027">Amidation</keyword>
<keyword id="KW-0165">Cleavage on pair of basic residues</keyword>
<keyword id="KW-0968">Cytoplasmic vesicle</keyword>
<keyword id="KW-0372">Hormone</keyword>
<keyword id="KW-1185">Reference proteome</keyword>
<keyword id="KW-0964">Secreted</keyword>
<keyword id="KW-0732">Signal</keyword>
<name>SPXN1_DANRE</name>
<organism>
    <name type="scientific">Danio rerio</name>
    <name type="common">Zebrafish</name>
    <name type="synonym">Brachydanio rerio</name>
    <dbReference type="NCBI Taxonomy" id="7955"/>
    <lineage>
        <taxon>Eukaryota</taxon>
        <taxon>Metazoa</taxon>
        <taxon>Chordata</taxon>
        <taxon>Craniata</taxon>
        <taxon>Vertebrata</taxon>
        <taxon>Euteleostomi</taxon>
        <taxon>Actinopterygii</taxon>
        <taxon>Neopterygii</taxon>
        <taxon>Teleostei</taxon>
        <taxon>Ostariophysi</taxon>
        <taxon>Cypriniformes</taxon>
        <taxon>Danionidae</taxon>
        <taxon>Danioninae</taxon>
        <taxon>Danio</taxon>
    </lineage>
</organism>
<gene>
    <name type="primary">spx</name>
    <name type="synonym">si:dkey-13i19.7</name>
</gene>
<accession>F1QQI2</accession>
<dbReference type="EMBL" id="BX649476">
    <property type="status" value="NOT_ANNOTATED_CDS"/>
    <property type="molecule type" value="Genomic_DNA"/>
</dbReference>
<dbReference type="RefSeq" id="NP_001410787.1">
    <property type="nucleotide sequence ID" value="NM_001423858.1"/>
</dbReference>
<dbReference type="RefSeq" id="XP_005164831.1">
    <property type="nucleotide sequence ID" value="XM_005164774.3"/>
</dbReference>
<dbReference type="FunCoup" id="F1QQI2">
    <property type="interactions" value="829"/>
</dbReference>
<dbReference type="STRING" id="7955.ENSDARP00000073885"/>
<dbReference type="PaxDb" id="7955-ENSDARP00000073885"/>
<dbReference type="Ensembl" id="ENSDART00000079429">
    <property type="protein sequence ID" value="ENSDARP00000073885"/>
    <property type="gene ID" value="ENSDARG00000056859"/>
</dbReference>
<dbReference type="GeneID" id="101882535"/>
<dbReference type="AGR" id="ZFIN:ZDB-GENE-041210-158"/>
<dbReference type="ZFIN" id="ZDB-GENE-041210-158">
    <property type="gene designation" value="spx"/>
</dbReference>
<dbReference type="eggNOG" id="ENOG502SAD1">
    <property type="taxonomic scope" value="Eukaryota"/>
</dbReference>
<dbReference type="HOGENOM" id="CLU_169090_0_0_1"/>
<dbReference type="InParanoid" id="F1QQI2"/>
<dbReference type="OMA" id="DEVYIQE"/>
<dbReference type="OrthoDB" id="9946068at2759"/>
<dbReference type="TreeFam" id="TF333402"/>
<dbReference type="PRO" id="PR:F1QQI2"/>
<dbReference type="Proteomes" id="UP000000437">
    <property type="component" value="Chromosome 4"/>
</dbReference>
<dbReference type="Bgee" id="ENSDARG00000056859">
    <property type="expression patterns" value="Expressed in nucleus of thalamus and 16 other cell types or tissues"/>
</dbReference>
<dbReference type="ExpressionAtlas" id="F1QQI2">
    <property type="expression patterns" value="baseline and differential"/>
</dbReference>
<dbReference type="GO" id="GO:0031045">
    <property type="term" value="C:dense core granule"/>
    <property type="evidence" value="ECO:0000250"/>
    <property type="project" value="UniProtKB"/>
</dbReference>
<dbReference type="GO" id="GO:0005615">
    <property type="term" value="C:extracellular space"/>
    <property type="evidence" value="ECO:0000250"/>
    <property type="project" value="UniProtKB"/>
</dbReference>
<dbReference type="GO" id="GO:0005634">
    <property type="term" value="C:nucleus"/>
    <property type="evidence" value="ECO:0000314"/>
    <property type="project" value="UniProtKB"/>
</dbReference>
<dbReference type="GO" id="GO:0030133">
    <property type="term" value="C:transport vesicle"/>
    <property type="evidence" value="ECO:0007669"/>
    <property type="project" value="UniProtKB-SubCell"/>
</dbReference>
<dbReference type="GO" id="GO:0005184">
    <property type="term" value="F:neuropeptide hormone activity"/>
    <property type="evidence" value="ECO:0000250"/>
    <property type="project" value="UniProtKB"/>
</dbReference>
<dbReference type="GO" id="GO:0031765">
    <property type="term" value="F:type 2 galanin receptor binding"/>
    <property type="evidence" value="ECO:0000250"/>
    <property type="project" value="UniProtKB"/>
</dbReference>
<dbReference type="GO" id="GO:0031766">
    <property type="term" value="F:type 3 galanin receptor binding"/>
    <property type="evidence" value="ECO:0000250"/>
    <property type="project" value="UniProtKB"/>
</dbReference>
<dbReference type="GO" id="GO:0042632">
    <property type="term" value="P:cholesterol homeostasis"/>
    <property type="evidence" value="ECO:0000315"/>
    <property type="project" value="UniProtKB"/>
</dbReference>
<dbReference type="GO" id="GO:0042593">
    <property type="term" value="P:glucose homeostasis"/>
    <property type="evidence" value="ECO:0000315"/>
    <property type="project" value="UniProtKB"/>
</dbReference>
<dbReference type="GO" id="GO:0044539">
    <property type="term" value="P:long-chain fatty acid import into cell"/>
    <property type="evidence" value="ECO:0000250"/>
    <property type="project" value="UniProtKB"/>
</dbReference>
<dbReference type="GO" id="GO:0032099">
    <property type="term" value="P:negative regulation of appetite"/>
    <property type="evidence" value="ECO:0000250"/>
    <property type="project" value="UniProtKB"/>
</dbReference>
<dbReference type="GO" id="GO:1903999">
    <property type="term" value="P:negative regulation of eating behavior"/>
    <property type="evidence" value="ECO:0000315"/>
    <property type="project" value="ZFIN"/>
</dbReference>
<dbReference type="GO" id="GO:0010459">
    <property type="term" value="P:negative regulation of heart rate"/>
    <property type="evidence" value="ECO:0000250"/>
    <property type="project" value="UniProtKB"/>
</dbReference>
<dbReference type="GO" id="GO:0035814">
    <property type="term" value="P:negative regulation of renal sodium excretion"/>
    <property type="evidence" value="ECO:0000250"/>
    <property type="project" value="UniProtKB"/>
</dbReference>
<dbReference type="GO" id="GO:1904306">
    <property type="term" value="P:positive regulation of gastro-intestinal system smooth muscle contraction"/>
    <property type="evidence" value="ECO:0000250"/>
    <property type="project" value="UniProtKB"/>
</dbReference>
<dbReference type="GO" id="GO:0003084">
    <property type="term" value="P:positive regulation of systemic arterial blood pressure"/>
    <property type="evidence" value="ECO:0000250"/>
    <property type="project" value="UniProtKB"/>
</dbReference>
<dbReference type="GO" id="GO:0045944">
    <property type="term" value="P:positive regulation of transcription by RNA polymerase II"/>
    <property type="evidence" value="ECO:0000250"/>
    <property type="project" value="UniProtKB"/>
</dbReference>
<dbReference type="GO" id="GO:0051930">
    <property type="term" value="P:regulation of sensory perception of pain"/>
    <property type="evidence" value="ECO:0000250"/>
    <property type="project" value="UniProtKB"/>
</dbReference>
<dbReference type="GO" id="GO:0070328">
    <property type="term" value="P:triglyceride homeostasis"/>
    <property type="evidence" value="ECO:0000315"/>
    <property type="project" value="UniProtKB"/>
</dbReference>
<dbReference type="InterPro" id="IPR028126">
    <property type="entry name" value="Spexin"/>
</dbReference>
<dbReference type="PANTHER" id="PTHR28590">
    <property type="entry name" value="SPEXIN"/>
    <property type="match status" value="1"/>
</dbReference>
<dbReference type="PANTHER" id="PTHR28590:SF1">
    <property type="entry name" value="SPEXIN"/>
    <property type="match status" value="1"/>
</dbReference>
<dbReference type="Pfam" id="PF15171">
    <property type="entry name" value="Spexin"/>
    <property type="match status" value="1"/>
</dbReference>
<protein>
    <recommendedName>
        <fullName evidence="11">Spexin prohormone 1</fullName>
    </recommendedName>
    <alternativeName>
        <fullName evidence="10">Neuropeptide Q</fullName>
    </alternativeName>
    <alternativeName>
        <fullName evidence="11">Spexin hormone</fullName>
    </alternativeName>
    <component>
        <recommendedName>
            <fullName evidence="9">Spexin-1</fullName>
        </recommendedName>
        <alternativeName>
            <fullName evidence="9">Spexin-14</fullName>
        </alternativeName>
    </component>
</protein>
<evidence type="ECO:0000250" key="1"/>
<evidence type="ECO:0000250" key="2">
    <source>
        <dbReference type="UniProtKB" id="Q9BT56"/>
    </source>
</evidence>
<evidence type="ECO:0000255" key="3"/>
<evidence type="ECO:0000269" key="4">
    <source>
    </source>
</evidence>
<evidence type="ECO:0000269" key="5">
    <source>
    </source>
</evidence>
<evidence type="ECO:0000269" key="6">
    <source>
    </source>
</evidence>
<evidence type="ECO:0000269" key="7">
    <source>
    </source>
</evidence>
<evidence type="ECO:0000269" key="8">
    <source>
    </source>
</evidence>
<evidence type="ECO:0000303" key="9">
    <source>
    </source>
</evidence>
<evidence type="ECO:0000303" key="10">
    <source>
    </source>
</evidence>
<evidence type="ECO:0000305" key="11"/>